<evidence type="ECO:0000255" key="1"/>
<evidence type="ECO:0000255" key="2">
    <source>
        <dbReference type="PROSITE-ProRule" id="PRU00114"/>
    </source>
</evidence>
<evidence type="ECO:0000269" key="3">
    <source>
    </source>
</evidence>
<evidence type="ECO:0000269" key="4">
    <source>
    </source>
</evidence>
<evidence type="ECO:0000269" key="5">
    <source>
    </source>
</evidence>
<evidence type="ECO:0000269" key="6">
    <source>
    </source>
</evidence>
<evidence type="ECO:0000269" key="7">
    <source>
    </source>
</evidence>
<evidence type="ECO:0000269" key="8">
    <source>
    </source>
</evidence>
<evidence type="ECO:0000269" key="9">
    <source>
    </source>
</evidence>
<evidence type="ECO:0000303" key="10">
    <source>
    </source>
</evidence>
<evidence type="ECO:0000303" key="11">
    <source>
    </source>
</evidence>
<evidence type="ECO:0000303" key="12">
    <source>
    </source>
</evidence>
<evidence type="ECO:0000303" key="13">
    <source>
    </source>
</evidence>
<evidence type="ECO:0000303" key="14">
    <source>
    </source>
</evidence>
<evidence type="ECO:0000303" key="15">
    <source>
    </source>
</evidence>
<evidence type="ECO:0000303" key="16">
    <source ref="12"/>
</evidence>
<evidence type="ECO:0000305" key="17"/>
<evidence type="ECO:0007829" key="18">
    <source>
        <dbReference type="PDB" id="4WWI"/>
    </source>
</evidence>
<evidence type="ECO:0007829" key="19">
    <source>
        <dbReference type="PDB" id="5W38"/>
    </source>
</evidence>
<evidence type="ECO:0007829" key="20">
    <source>
        <dbReference type="PDB" id="6D58"/>
    </source>
</evidence>
<evidence type="ECO:0007829" key="21">
    <source>
        <dbReference type="PDB" id="6G1E"/>
    </source>
</evidence>
<accession>P01860</accession>
<accession>A0A075B6N8</accession>
<accession>A0A286YES1</accession>
<accession>A0A4W9A917</accession>
<accession>A2NU35</accession>
<comment type="function">
    <text evidence="11 13 14">Constant region of immunoglobulin heavy chains. Immunoglobulins, also known as antibodies, are membrane-bound or secreted glycoproteins produced by B lymphocytes. In the recognition phase of humoral immunity, the membrane-bound immunoglobulins serve as receptors which, upon binding of a specific antigen, trigger the clonal expansion and differentiation of B lymphocytes into immunoglobulins-secreting plasma cells. Secreted immunoglobulins mediate the effector phase of humoral immunity, which results in the elimination of bound antigens (PubMed:20176268, PubMed:22158414). The antigen binding site is formed by the variable domain of one heavy chain, together with that of its associated light chain. Thus, each immunoglobulin has two antigen binding sites with remarkable affinity for a particular antigen. The variable domains are assembled by a process called V-(D)-J rearrangement and can then be subjected to somatic hypermutations which, after exposure to antigen and selection, allow affinity maturation for a particular antigen (PubMed:17576170, PubMed:20176268).</text>
</comment>
<comment type="subunit">
    <text evidence="13">Immunoglobulins are composed of two identical heavy chains and two identical light chains; disulfide-linked.</text>
</comment>
<comment type="subcellular location">
    <molecule>Isoform 1</molecule>
    <subcellularLocation>
        <location evidence="13 14">Secreted</location>
    </subcellularLocation>
</comment>
<comment type="subcellular location">
    <molecule>Isoform 2</molecule>
    <subcellularLocation>
        <location evidence="13 14">Cell membrane</location>
        <topology evidence="1">Single-pass membrane protein</topology>
    </subcellularLocation>
</comment>
<comment type="alternative products">
    <event type="alternative splicing"/>
    <isoform>
        <id>P01860-2</id>
        <name>2</name>
        <name>Membrane-bound</name>
        <name evidence="12 15">mIgG3</name>
        <sequence type="displayed"/>
    </isoform>
    <isoform>
        <id>P01860-1</id>
        <name>1</name>
        <name>Secreted</name>
        <name evidence="15">sIgG3</name>
        <sequence type="described" ref="VSP_061822 VSP_061823"/>
    </isoform>
</comment>
<comment type="PTM">
    <text evidence="9">N-linked glycans at Asn-322 are noncore fucosylated and the vast majority are diantennary species with a bisecting GlcNAc. Among them the most dominant glycans are HexNAc5Hex4, HexNAc5Hex5, and HexNAc5Hex5Sia1.</text>
</comment>
<comment type="PTM">
    <text evidence="6 9">N-linked glycans at Asn-227 are diantennary core fucosylated structures without bisecting GlcNAc (HexNAc4Hex4Fuc1, HexNAc4Hex5Fuc1, and HexNAc4Hex5Fuc1Sia1) (PubMed:26536155). Glycosylation on Asn-227 is required for interaction with Fc receptors and ability to activate the complement pathway (PubMed:20357243).</text>
</comment>
<comment type="PTM">
    <text evidence="3 6 7">(Microbial infection) Deglycosylation on Asn-227 by S.pyogenes EndoS or Endos2 endoglucosidases prevents interaction between immunoglobulin-gamma (IgG) and Fc receptors, impairing ability to activate the complement pathway.</text>
</comment>
<comment type="PTM">
    <text evidence="8">O-linked glycans are non-, mono- and disialylated core 1-type O-glycans.</text>
</comment>
<comment type="polymorphism">
    <text evidence="17">There are several alleles. The sequence shown is that of IMGT allele IGHG3*10.</text>
</comment>
<comment type="caution">
    <text evidence="17">For an example of a full-length immunoglobulin gamma heavy chain see AC P0DOX5.</text>
</comment>
<comment type="sequence caution" evidence="17">
    <conflict type="erroneous initiation">
        <sequence resource="EMBL-CDS" id="AAA52805"/>
    </conflict>
    <text>Extended N-terminus.</text>
</comment>
<comment type="sequence caution" evidence="17">
    <conflict type="erroneous initiation">
        <sequence resource="EMBL-CDS" id="BAA11363"/>
    </conflict>
    <text>Extended N-terminus.</text>
</comment>
<keyword id="KW-0002">3D-structure</keyword>
<keyword id="KW-1064">Adaptive immunity</keyword>
<keyword id="KW-0025">Alternative splicing</keyword>
<keyword id="KW-1003">Cell membrane</keyword>
<keyword id="KW-0903">Direct protein sequencing</keyword>
<keyword id="KW-1015">Disulfide bond</keyword>
<keyword id="KW-0325">Glycoprotein</keyword>
<keyword id="KW-0391">Immunity</keyword>
<keyword id="KW-1280">Immunoglobulin</keyword>
<keyword id="KW-0393">Immunoglobulin domain</keyword>
<keyword id="KW-0472">Membrane</keyword>
<keyword id="KW-1267">Proteomics identification</keyword>
<keyword id="KW-1185">Reference proteome</keyword>
<keyword id="KW-0677">Repeat</keyword>
<keyword id="KW-0964">Secreted</keyword>
<keyword id="KW-0812">Transmembrane</keyword>
<keyword id="KW-1133">Transmembrane helix</keyword>
<gene>
    <name evidence="10 16" type="primary">IGHG3</name>
</gene>
<protein>
    <recommendedName>
        <fullName evidence="10 16">Immunoglobulin heavy constant gamma 3</fullName>
    </recommendedName>
    <alternativeName>
        <fullName>HDC</fullName>
    </alternativeName>
    <alternativeName>
        <fullName>Heavy chain disease protein</fullName>
    </alternativeName>
    <alternativeName>
        <fullName evidence="17">Ig gamma-3 chain C region</fullName>
    </alternativeName>
</protein>
<reference key="1">
    <citation type="journal article" date="1986" name="Nucleic Acids Res.">
        <title>Sequence of a human immunoglobulin gamma 3 heavy chain constant region gene: comparison with the other human C gamma genes.</title>
        <authorList>
            <person name="Huck S."/>
            <person name="Fort P."/>
            <person name="Crawford D.H."/>
            <person name="Lefranc M.-P."/>
            <person name="Lefranc G."/>
        </authorList>
    </citation>
    <scope>NUCLEOTIDE SEQUENCE [GENOMIC DNA] (IMGT ALLELE IGHG3*01) (ISOFORM 1)</scope>
</reference>
<reference key="2">
    <citation type="journal article" date="1997" name="Genomics">
        <title>Nucleotide sequences of all the gamma gene loci of murine immunoglobulin heavy chains.</title>
        <authorList>
            <person name="Akahori Y."/>
            <person name="Kurosawa Y."/>
        </authorList>
    </citation>
    <scope>NUCLEOTIDE SEQUENCE [GENOMIC DNA] (ISOFORM 2)</scope>
</reference>
<reference key="3">
    <citation type="journal article" date="2003" name="Nature">
        <title>The DNA sequence and analysis of human chromosome 14.</title>
        <authorList>
            <person name="Heilig R."/>
            <person name="Eckenberg R."/>
            <person name="Petit J.-L."/>
            <person name="Fonknechten N."/>
            <person name="Da Silva C."/>
            <person name="Cattolico L."/>
            <person name="Levy M."/>
            <person name="Barbe V."/>
            <person name="De Berardinis V."/>
            <person name="Ureta-Vidal A."/>
            <person name="Pelletier E."/>
            <person name="Vico V."/>
            <person name="Anthouard V."/>
            <person name="Rowen L."/>
            <person name="Madan A."/>
            <person name="Qin S."/>
            <person name="Sun H."/>
            <person name="Du H."/>
            <person name="Pepin K."/>
            <person name="Artiguenave F."/>
            <person name="Robert C."/>
            <person name="Cruaud C."/>
            <person name="Bruels T."/>
            <person name="Jaillon O."/>
            <person name="Friedlander L."/>
            <person name="Samson G."/>
            <person name="Brottier P."/>
            <person name="Cure S."/>
            <person name="Segurens B."/>
            <person name="Aniere F."/>
            <person name="Samain S."/>
            <person name="Crespeau H."/>
            <person name="Abbasi N."/>
            <person name="Aiach N."/>
            <person name="Boscus D."/>
            <person name="Dickhoff R."/>
            <person name="Dors M."/>
            <person name="Dubois I."/>
            <person name="Friedman C."/>
            <person name="Gouyvenoux M."/>
            <person name="James R."/>
            <person name="Madan A."/>
            <person name="Mairey-Estrada B."/>
            <person name="Mangenot S."/>
            <person name="Martins N."/>
            <person name="Menard M."/>
            <person name="Oztas S."/>
            <person name="Ratcliffe A."/>
            <person name="Shaffer T."/>
            <person name="Trask B."/>
            <person name="Vacherie B."/>
            <person name="Bellemere C."/>
            <person name="Belser C."/>
            <person name="Besnard-Gonnet M."/>
            <person name="Bartol-Mavel D."/>
            <person name="Boutard M."/>
            <person name="Briez-Silla S."/>
            <person name="Combette S."/>
            <person name="Dufosse-Laurent V."/>
            <person name="Ferron C."/>
            <person name="Lechaplais C."/>
            <person name="Louesse C."/>
            <person name="Muselet D."/>
            <person name="Magdelenat G."/>
            <person name="Pateau E."/>
            <person name="Petit E."/>
            <person name="Sirvain-Trukniewicz P."/>
            <person name="Trybou A."/>
            <person name="Vega-Czarny N."/>
            <person name="Bataille E."/>
            <person name="Bluet E."/>
            <person name="Bordelais I."/>
            <person name="Dubois M."/>
            <person name="Dumont C."/>
            <person name="Guerin T."/>
            <person name="Haffray S."/>
            <person name="Hammadi R."/>
            <person name="Muanga J."/>
            <person name="Pellouin V."/>
            <person name="Robert D."/>
            <person name="Wunderle E."/>
            <person name="Gauguet G."/>
            <person name="Roy A."/>
            <person name="Sainte-Marthe L."/>
            <person name="Verdier J."/>
            <person name="Verdier-Discala C."/>
            <person name="Hillier L.W."/>
            <person name="Fulton L."/>
            <person name="McPherson J."/>
            <person name="Matsuda F."/>
            <person name="Wilson R."/>
            <person name="Scarpelli C."/>
            <person name="Gyapay G."/>
            <person name="Wincker P."/>
            <person name="Saurin W."/>
            <person name="Quetier F."/>
            <person name="Waterston R."/>
            <person name="Hood L."/>
            <person name="Weissenbach J."/>
        </authorList>
    </citation>
    <scope>NUCLEOTIDE SEQUENCE [LARGE SCALE GENOMIC DNA] (IMGT ALLELE IGHG3*10) (ISOFORMS 1 AND 2)</scope>
</reference>
<reference key="4">
    <citation type="journal article" date="1982" name="Proc. Natl. Acad. Sci. U.S.A.">
        <title>Gamma heavy chain disease in man: cDNA sequence supports partial gene deletion model.</title>
        <authorList>
            <person name="Alexander A."/>
            <person name="Steinmetz M."/>
            <person name="Barritault D."/>
            <person name="Frangione B."/>
            <person name="Franklin E.C."/>
            <person name="Hood L."/>
            <person name="Buxbaum J.N."/>
        </authorList>
    </citation>
    <scope>NUCLEOTIDE SEQUENCE [MRNA] OF 99-377 (VARIANT OMM)</scope>
</reference>
<reference key="5">
    <citation type="journal article" date="1990" name="Immunogenetics">
        <title>Gene segments encoding membrane domains of the human immunoglobulin gamma 3 and alpha chains.</title>
        <authorList>
            <person name="Bensmana M."/>
            <person name="Lefranc M.P."/>
        </authorList>
    </citation>
    <scope>NUCLEOTIDE SEQUENCE [MRNA] OF 376-446 (ISOFORM 2)</scope>
</reference>
<reference key="6">
    <citation type="journal article" date="1982" name="Cell">
        <title>Structure of human immunoglobulin gamma genes: implications for evolution of a gene family.</title>
        <authorList>
            <person name="Takahashi N."/>
            <person name="Ueda S."/>
            <person name="Obata M."/>
            <person name="Nikaido T."/>
            <person name="Nakai S."/>
            <person name="Honjo T."/>
        </authorList>
    </citation>
    <scope>NUCLEOTIDE SEQUENCE [GENOMIC DNA] OF 99-102</scope>
</reference>
<reference key="7">
    <citation type="journal article" date="1980" name="Biochemistry">
        <title>Primary structure of human gamma 3 immunoglobulin deletion mutant: gamma 3 heavy-chain disease protein Wis.</title>
        <authorList>
            <person name="Frangione B."/>
            <person name="Rosenwasser E."/>
            <person name="Prelli F."/>
            <person name="Franklin E.C."/>
        </authorList>
    </citation>
    <scope>PROTEIN SEQUENCE (VARIANT WIS)</scope>
    <scope>SUBUNIT</scope>
</reference>
<reference key="8">
    <citation type="journal article" date="1976" name="Biochem. Biophys. Res. Commun.">
        <title>The amino acid sequence of 'heavy chain disease' protein ZUC. Structure of the Fc fragment of immunoglobulin G3.</title>
        <authorList>
            <person name="Wolfenstein-Todel C."/>
            <person name="Frangione B."/>
            <person name="Prelli F."/>
            <person name="Franklin E.C."/>
        </authorList>
    </citation>
    <scope>SEQUENCE REVISION TO 59-289 (VARIANT WIS/VARIANT ZUC)</scope>
</reference>
<reference key="9">
    <citation type="journal article" date="1977" name="J. Biol. Chem.">
        <title>Primary structure of the 'hinge' region of human IgG3. Probable quadruplication of a 15-amino acid residue basic unit.</title>
        <authorList>
            <person name="Michaelsen T.E."/>
            <person name="Frangione B."/>
            <person name="Franklin E.C."/>
        </authorList>
    </citation>
    <scope>SEQUENCE REVISION TO 146-376 (VARIANT WIS/VARIANT ZUC)</scope>
</reference>
<reference key="10">
    <citation type="journal article" date="2001" name="EMBO J.">
        <title>EndoS, a novel secreted protein from Streptococcus pyogenes with endoglycosidase activity on human IgG.</title>
        <authorList>
            <person name="Collin M."/>
            <person name="Olsen A."/>
        </authorList>
    </citation>
    <scope>GLYCOSYLATION AT ASN-227</scope>
    <scope>DEGLYCOSYLATION (MICROBIAL INFECTION)</scope>
</reference>
<reference key="11">
    <citation type="journal article" date="2001" name="Exp. Clin. Immunogenet.">
        <title>Nomenclature of the human immunoglobulin heavy (IGH) genes.</title>
        <authorList>
            <person name="Lefranc M.P."/>
        </authorList>
    </citation>
    <scope>NOMENCLATURE</scope>
</reference>
<reference key="12">
    <citation type="book" date="2001" name="The Immunoglobulin FactsBook.">
        <title>The Immunoglobulin FactsBook.</title>
        <editorList>
            <person name="Lefranc M.P."/>
            <person name="Lefranc G."/>
        </editorList>
        <authorList>
            <person name="Lefranc M.P."/>
            <person name="Lefranc G."/>
        </authorList>
    </citation>
    <scope>NOMENCLATURE</scope>
</reference>
<reference key="13">
    <citation type="journal article" date="2005" name="J. Proteome Res.">
        <title>Human plasma N-glycoproteome analysis by immunoaffinity subtraction, hydrazide chemistry, and mass spectrometry.</title>
        <authorList>
            <person name="Liu T."/>
            <person name="Qian W.-J."/>
            <person name="Gritsenko M.A."/>
            <person name="Camp D.G. II"/>
            <person name="Monroe M.E."/>
            <person name="Moore R.J."/>
            <person name="Smith R.D."/>
        </authorList>
    </citation>
    <scope>GLYCOSYLATION [LARGE SCALE ANALYSIS] AT ASN-227</scope>
    <source>
        <tissue>Plasma</tissue>
    </source>
</reference>
<reference key="14">
    <citation type="journal article" date="2007" name="Annu. Rev. Genet.">
        <title>Immunoglobulin somatic hypermutation.</title>
        <authorList>
            <person name="Teng G."/>
            <person name="Papavasiliou F.N."/>
        </authorList>
    </citation>
    <scope>REVIEW ON SOMATIC HYPERMUTATION</scope>
</reference>
<reference key="15">
    <citation type="journal article" date="2009" name="J. Proteome Res.">
        <title>Glycoproteomics analysis of human liver tissue by combination of multiple enzyme digestion and hydrazide chemistry.</title>
        <authorList>
            <person name="Chen R."/>
            <person name="Jiang X."/>
            <person name="Sun D."/>
            <person name="Han G."/>
            <person name="Wang F."/>
            <person name="Ye M."/>
            <person name="Wang L."/>
            <person name="Zou H."/>
        </authorList>
    </citation>
    <scope>GLYCOSYLATION [LARGE SCALE ANALYSIS] AT ASN-227</scope>
    <source>
        <tissue>Liver</tissue>
    </source>
</reference>
<reference key="16">
    <citation type="journal article" date="2010" name="Blood">
        <title>The IgG-specific endoglycosidase EndoS inhibits both cellular and complement-mediated autoimmune hemolysis.</title>
        <authorList>
            <person name="Allhorn M."/>
            <person name="Briceno J.G."/>
            <person name="Baudino L."/>
            <person name="Lood C."/>
            <person name="Olsson M.L."/>
            <person name="Izui S."/>
            <person name="Collin M."/>
        </authorList>
    </citation>
    <scope>GLYCOSYLATION AT ASN-227</scope>
    <scope>DEGLYCOSYLATION (MICROBIAL INFECTION)</scope>
</reference>
<reference key="17">
    <citation type="journal article" date="2010" name="J. Allergy Clin. Immunol.">
        <title>Structure and function of immunoglobulins.</title>
        <authorList>
            <person name="Schroeder H.W. Jr."/>
            <person name="Cavacini L."/>
        </authorList>
    </citation>
    <scope>REVIEW ON IMMUNOGLOBULINS</scope>
</reference>
<reference key="18">
    <citation type="journal article" date="2012" name="Nat. Rev. Immunol.">
        <title>Molecular programming of B cell memory.</title>
        <authorList>
            <person name="McHeyzer-Williams M."/>
            <person name="Okitsu S."/>
            <person name="Wang N."/>
            <person name="McHeyzer-Williams L."/>
        </authorList>
    </citation>
    <scope>REVIEW ON FUNCTION</scope>
</reference>
<reference key="19">
    <citation type="journal article" date="2013" name="Biochem. J.">
        <title>EndoS2 is a unique and conserved enzyme of serotype M49 group A Streptococcus that hydrolyses N-linked glycans on IgG and alpha1-acid glycoprotein.</title>
        <authorList>
            <person name="Sjoegren J."/>
            <person name="Struwe W.B."/>
            <person name="Cosgrave E.F."/>
            <person name="Rudd P.M."/>
            <person name="Stervander M."/>
            <person name="Allhorn M."/>
            <person name="Hollands A."/>
            <person name="Nizet V."/>
            <person name="Collin M."/>
        </authorList>
    </citation>
    <scope>DEGLYCOSYLATION (MICROBIAL INFECTION)</scope>
</reference>
<reference key="20">
    <citation type="journal article" date="2014" name="J. Proteomics">
        <title>An enzyme assisted RP-RPLC approach for in-depth analysis of human liver phosphoproteome.</title>
        <authorList>
            <person name="Bian Y."/>
            <person name="Song C."/>
            <person name="Cheng K."/>
            <person name="Dong M."/>
            <person name="Wang F."/>
            <person name="Huang J."/>
            <person name="Sun D."/>
            <person name="Wang L."/>
            <person name="Ye M."/>
            <person name="Zou H."/>
        </authorList>
    </citation>
    <scope>IDENTIFICATION BY MASS SPECTROMETRY [LARGE SCALE ANALYSIS]</scope>
    <source>
        <tissue>Liver</tissue>
    </source>
</reference>
<reference key="21">
    <citation type="journal article" date="2015" name="Anal. Chem.">
        <title>Site-Specific Protein N- and O-Glycosylation Analysis by a C18-Porous Graphitized Carbon-Liquid Chromatography-Electrospray Ionization Mass Spectrometry Approach Using Pronase Treated Glycopeptides.</title>
        <authorList>
            <person name="Stavenhagen K."/>
            <person name="Plomp R."/>
            <person name="Wuhrer M."/>
        </authorList>
    </citation>
    <scope>GLYCOSYLATION AT THR-122; THR-137; THR-152; ASN-227 AND ASN-322</scope>
    <scope>IDENTIFICATION BY MASS SPECTROMETRY</scope>
</reference>
<reference key="22">
    <citation type="journal article" date="2015" name="Mol. Cell. Proteomics">
        <title>Hinge-Region O-Glycosylation of Human Immunoglobulin G3 (IgG3).</title>
        <authorList>
            <person name="Plomp R."/>
            <person name="Dekkers G."/>
            <person name="Rombouts Y."/>
            <person name="Visser R."/>
            <person name="Koeleman C.A."/>
            <person name="Kammeijer G.S."/>
            <person name="Jansen B.C."/>
            <person name="Rispens T."/>
            <person name="Hensbergen P.J."/>
            <person name="Vidarsson G."/>
            <person name="Wuhrer M."/>
        </authorList>
    </citation>
    <scope>GLYCOSYLATION AT THR-122; THR-137 AND THR-152</scope>
    <scope>IDENTIFICATION BY MASS SPECTROMETRY</scope>
</reference>
<proteinExistence type="evidence at protein level"/>
<dbReference type="EMBL" id="X03604">
    <property type="protein sequence ID" value="CAA27268.1"/>
    <property type="molecule type" value="Genomic_DNA"/>
</dbReference>
<dbReference type="EMBL" id="D78345">
    <property type="protein sequence ID" value="BAA11363.1"/>
    <property type="status" value="ALT_INIT"/>
    <property type="molecule type" value="Genomic_DNA"/>
</dbReference>
<dbReference type="EMBL" id="AC244226">
    <property type="status" value="NOT_ANNOTATED_CDS"/>
    <property type="molecule type" value="Genomic_DNA"/>
</dbReference>
<dbReference type="EMBL" id="AC246787">
    <property type="status" value="NOT_ANNOTATED_CDS"/>
    <property type="molecule type" value="Genomic_DNA"/>
</dbReference>
<dbReference type="EMBL" id="AL122127">
    <property type="status" value="NOT_ANNOTATED_CDS"/>
    <property type="molecule type" value="Genomic_DNA"/>
</dbReference>
<dbReference type="EMBL" id="J00231">
    <property type="protein sequence ID" value="AAA52805.1"/>
    <property type="status" value="ALT_INIT"/>
    <property type="molecule type" value="mRNA"/>
</dbReference>
<dbReference type="PIR" id="A23511">
    <property type="entry name" value="A23511"/>
</dbReference>
<dbReference type="PIR" id="A90442">
    <property type="entry name" value="G3HUWI"/>
</dbReference>
<dbReference type="PDB" id="4WWI">
    <property type="method" value="X-ray"/>
    <property type="resolution" value="2.31 A"/>
    <property type="chains" value="D/E/F=168-377"/>
</dbReference>
<dbReference type="PDB" id="4ZNC">
    <property type="method" value="X-ray"/>
    <property type="resolution" value="2.28 A"/>
    <property type="chains" value="D/E/F=168-377"/>
</dbReference>
<dbReference type="PDB" id="5M3V">
    <property type="method" value="X-ray"/>
    <property type="resolution" value="1.97 A"/>
    <property type="chains" value="A=286-377"/>
</dbReference>
<dbReference type="PDB" id="5W38">
    <property type="method" value="X-ray"/>
    <property type="resolution" value="1.80 A"/>
    <property type="chains" value="A/B=155-377"/>
</dbReference>
<dbReference type="PDB" id="6D58">
    <property type="method" value="X-ray"/>
    <property type="resolution" value="2.39 A"/>
    <property type="chains" value="A/B=164-377"/>
</dbReference>
<dbReference type="PDB" id="6G1E">
    <property type="method" value="X-ray"/>
    <property type="resolution" value="1.88 A"/>
    <property type="chains" value="A=204-377"/>
</dbReference>
<dbReference type="PDBsum" id="4WWI"/>
<dbReference type="PDBsum" id="4ZNC"/>
<dbReference type="PDBsum" id="5M3V"/>
<dbReference type="PDBsum" id="5W38"/>
<dbReference type="PDBsum" id="6D58"/>
<dbReference type="PDBsum" id="6G1E"/>
<dbReference type="EMDB" id="EMD-17451"/>
<dbReference type="EMDB" id="EMD-23298"/>
<dbReference type="EMDB" id="EMD-41918"/>
<dbReference type="SMR" id="P01860"/>
<dbReference type="ComplexPortal" id="CPX-6943">
    <property type="entry name" value="IgG3 - Ig kappa immunoglobulin complex, constant regions"/>
</dbReference>
<dbReference type="ComplexPortal" id="CPX-6944">
    <property type="entry name" value="IgG3 - Ig lambda 1 immunoglobulin complex, constant regions"/>
</dbReference>
<dbReference type="ComplexPortal" id="CPX-6945">
    <property type="entry name" value="IgG3 - Ig lambda 2 immunoglobulin complex, constant regions"/>
</dbReference>
<dbReference type="ComplexPortal" id="CPX-6946">
    <property type="entry name" value="IgG3 - Ig lambda 3 immunoglobulin complex, constant regions"/>
</dbReference>
<dbReference type="ComplexPortal" id="CPX-6947">
    <property type="entry name" value="IgG3 - Ig lambda 6 immunoglobulin complex, constant regions"/>
</dbReference>
<dbReference type="ComplexPortal" id="CPX-6948">
    <property type="entry name" value="IgG3 - Ig lambda 7 immunoglobulin complex, constant regions"/>
</dbReference>
<dbReference type="FunCoup" id="P01860">
    <property type="interactions" value="183"/>
</dbReference>
<dbReference type="IntAct" id="P01860">
    <property type="interactions" value="46"/>
</dbReference>
<dbReference type="DrugBank" id="DB15258">
    <property type="generic name" value="Imlifidase"/>
</dbReference>
<dbReference type="DrugCentral" id="P01860"/>
<dbReference type="IMGT_GENE-DB" id="IGHG3"/>
<dbReference type="GlyConnect" id="1385">
    <property type="glycosylation" value="44 N-Linked glycans (2 sites), 3 O-Linked glycans (3 sites)"/>
</dbReference>
<dbReference type="GlyConnect" id="233">
    <property type="glycosylation" value="111 N-Linked glycans"/>
</dbReference>
<dbReference type="GlyConnect" id="271">
    <property type="glycosylation" value="14 N-Linked glycans"/>
</dbReference>
<dbReference type="GlyConnect" id="2959">
    <property type="glycosylation" value="4 O-Linked glycans (3 sites)"/>
</dbReference>
<dbReference type="GlyConnect" id="2960">
    <property type="glycosylation" value="4 O-Linked glycans (3 sites)"/>
</dbReference>
<dbReference type="GlyCosmos" id="P01860">
    <property type="glycosylation" value="5 sites, 123 glycans"/>
</dbReference>
<dbReference type="GlyGen" id="P01860">
    <property type="glycosylation" value="7 sites, 117 N-linked glycans (3 sites), 10 O-linked glycans (5 sites)"/>
</dbReference>
<dbReference type="iPTMnet" id="P01860"/>
<dbReference type="PhosphoSitePlus" id="P01860"/>
<dbReference type="SwissPalm" id="P01860"/>
<dbReference type="BioMuta" id="IGHG3"/>
<dbReference type="DMDM" id="193806361"/>
<dbReference type="jPOST" id="P01860"/>
<dbReference type="MassIVE" id="P01860"/>
<dbReference type="PeptideAtlas" id="P01860"/>
<dbReference type="ProteomicsDB" id="51496"/>
<dbReference type="Pumba" id="P01860"/>
<dbReference type="UCSC" id="uc059gdk.1">
    <property type="organism name" value="human"/>
</dbReference>
<dbReference type="AGR" id="HGNC:5527"/>
<dbReference type="GeneCards" id="IGHG3"/>
<dbReference type="HGNC" id="HGNC:5527">
    <property type="gene designation" value="IGHG3"/>
</dbReference>
<dbReference type="MIM" id="147120">
    <property type="type" value="gene"/>
</dbReference>
<dbReference type="neXtProt" id="NX_P01860"/>
<dbReference type="VEuPathDB" id="HostDB:ENSG00000211897"/>
<dbReference type="InParanoid" id="P01860"/>
<dbReference type="PAN-GO" id="P01860">
    <property type="GO annotations" value="11 GO annotations based on evolutionary models"/>
</dbReference>
<dbReference type="PhylomeDB" id="P01860"/>
<dbReference type="PathwayCommons" id="P01860"/>
<dbReference type="Reactome" id="R-HSA-166663">
    <property type="pathway name" value="Initial triggering of complement"/>
</dbReference>
<dbReference type="Reactome" id="R-HSA-173623">
    <property type="pathway name" value="Classical antibody-mediated complement activation"/>
</dbReference>
<dbReference type="Reactome" id="R-HSA-2029481">
    <property type="pathway name" value="FCGR activation"/>
</dbReference>
<dbReference type="Reactome" id="R-HSA-2029482">
    <property type="pathway name" value="Regulation of actin dynamics for phagocytic cup formation"/>
</dbReference>
<dbReference type="Reactome" id="R-HSA-2029485">
    <property type="pathway name" value="Role of phospholipids in phagocytosis"/>
</dbReference>
<dbReference type="Reactome" id="R-HSA-9664323">
    <property type="pathway name" value="FCGR3A-mediated IL10 synthesis"/>
</dbReference>
<dbReference type="Reactome" id="R-HSA-9664422">
    <property type="pathway name" value="FCGR3A-mediated phagocytosis"/>
</dbReference>
<dbReference type="Reactome" id="R-HSA-977606">
    <property type="pathway name" value="Regulation of Complement cascade"/>
</dbReference>
<dbReference type="SignaLink" id="P01860"/>
<dbReference type="ChiTaRS" id="IGHG3">
    <property type="organism name" value="human"/>
</dbReference>
<dbReference type="EvolutionaryTrace" id="P01860"/>
<dbReference type="Pharos" id="P01860">
    <property type="development level" value="Tclin"/>
</dbReference>
<dbReference type="PRO" id="PR:P01860"/>
<dbReference type="Proteomes" id="UP000005640">
    <property type="component" value="Chromosome 14"/>
</dbReference>
<dbReference type="RNAct" id="P01860">
    <property type="molecule type" value="protein"/>
</dbReference>
<dbReference type="Bgee" id="ENSG00000211897">
    <property type="expression patterns" value="Expressed in lymph node and 92 other cell types or tissues"/>
</dbReference>
<dbReference type="GO" id="GO:0072562">
    <property type="term" value="C:blood microparticle"/>
    <property type="evidence" value="ECO:0007005"/>
    <property type="project" value="UniProtKB"/>
</dbReference>
<dbReference type="GO" id="GO:0070062">
    <property type="term" value="C:extracellular exosome"/>
    <property type="evidence" value="ECO:0007005"/>
    <property type="project" value="UniProtKB"/>
</dbReference>
<dbReference type="GO" id="GO:0005576">
    <property type="term" value="C:extracellular region"/>
    <property type="evidence" value="ECO:0000304"/>
    <property type="project" value="Reactome"/>
</dbReference>
<dbReference type="GO" id="GO:0005615">
    <property type="term" value="C:extracellular space"/>
    <property type="evidence" value="ECO:0007005"/>
    <property type="project" value="UniProtKB"/>
</dbReference>
<dbReference type="GO" id="GO:0071735">
    <property type="term" value="C:IgG immunoglobulin complex"/>
    <property type="evidence" value="ECO:0000303"/>
    <property type="project" value="ComplexPortal"/>
</dbReference>
<dbReference type="GO" id="GO:0042571">
    <property type="term" value="C:immunoglobulin complex, circulating"/>
    <property type="evidence" value="ECO:0000318"/>
    <property type="project" value="GO_Central"/>
</dbReference>
<dbReference type="GO" id="GO:0005886">
    <property type="term" value="C:plasma membrane"/>
    <property type="evidence" value="ECO:0000303"/>
    <property type="project" value="ComplexPortal"/>
</dbReference>
<dbReference type="GO" id="GO:0003823">
    <property type="term" value="F:antigen binding"/>
    <property type="evidence" value="ECO:0000318"/>
    <property type="project" value="GO_Central"/>
</dbReference>
<dbReference type="GO" id="GO:0034987">
    <property type="term" value="F:immunoglobulin receptor binding"/>
    <property type="evidence" value="ECO:0000318"/>
    <property type="project" value="GO_Central"/>
</dbReference>
<dbReference type="GO" id="GO:0002250">
    <property type="term" value="P:adaptive immune response"/>
    <property type="evidence" value="ECO:0000303"/>
    <property type="project" value="ComplexPortal"/>
</dbReference>
<dbReference type="GO" id="GO:0019731">
    <property type="term" value="P:antibacterial humoral response"/>
    <property type="evidence" value="ECO:0000318"/>
    <property type="project" value="GO_Central"/>
</dbReference>
<dbReference type="GO" id="GO:0050853">
    <property type="term" value="P:B cell receptor signaling pathway"/>
    <property type="evidence" value="ECO:0000303"/>
    <property type="project" value="ComplexPortal"/>
</dbReference>
<dbReference type="GO" id="GO:0006958">
    <property type="term" value="P:complement activation, classical pathway"/>
    <property type="evidence" value="ECO:0000318"/>
    <property type="project" value="GO_Central"/>
</dbReference>
<dbReference type="CDD" id="cd21817">
    <property type="entry name" value="IgC1_CH1_IgEG"/>
    <property type="match status" value="1"/>
</dbReference>
<dbReference type="CDD" id="cd05768">
    <property type="entry name" value="IgC1_CH3_IgAGD_CH4_IgAEM"/>
    <property type="match status" value="1"/>
</dbReference>
<dbReference type="FunFam" id="2.60.40.10:FF:000463">
    <property type="entry name" value="Immunoglobulin heavy constant gamma 1"/>
    <property type="match status" value="1"/>
</dbReference>
<dbReference type="FunFam" id="2.60.40.10:FF:001129">
    <property type="entry name" value="Immunoglobulin heavy constant gamma 1"/>
    <property type="match status" value="1"/>
</dbReference>
<dbReference type="FunFam" id="2.60.40.10:FF:001540">
    <property type="entry name" value="Immunoglobulin heavy constant gamma 1"/>
    <property type="match status" value="1"/>
</dbReference>
<dbReference type="Gene3D" id="2.60.40.10">
    <property type="entry name" value="Immunoglobulins"/>
    <property type="match status" value="3"/>
</dbReference>
<dbReference type="InterPro" id="IPR007110">
    <property type="entry name" value="Ig-like_dom"/>
</dbReference>
<dbReference type="InterPro" id="IPR036179">
    <property type="entry name" value="Ig-like_dom_sf"/>
</dbReference>
<dbReference type="InterPro" id="IPR013783">
    <property type="entry name" value="Ig-like_fold"/>
</dbReference>
<dbReference type="InterPro" id="IPR003006">
    <property type="entry name" value="Ig/MHC_CS"/>
</dbReference>
<dbReference type="InterPro" id="IPR003597">
    <property type="entry name" value="Ig_C1-set"/>
</dbReference>
<dbReference type="InterPro" id="IPR050380">
    <property type="entry name" value="Immune_Resp_Modulators"/>
</dbReference>
<dbReference type="PANTHER" id="PTHR23411">
    <property type="entry name" value="TAPASIN"/>
    <property type="match status" value="1"/>
</dbReference>
<dbReference type="Pfam" id="PF07654">
    <property type="entry name" value="C1-set"/>
    <property type="match status" value="3"/>
</dbReference>
<dbReference type="SMART" id="SM00407">
    <property type="entry name" value="IGc1"/>
    <property type="match status" value="3"/>
</dbReference>
<dbReference type="SUPFAM" id="SSF48726">
    <property type="entry name" value="Immunoglobulin"/>
    <property type="match status" value="3"/>
</dbReference>
<dbReference type="PROSITE" id="PS50835">
    <property type="entry name" value="IG_LIKE"/>
    <property type="match status" value="3"/>
</dbReference>
<dbReference type="PROSITE" id="PS00290">
    <property type="entry name" value="IG_MHC"/>
    <property type="match status" value="2"/>
</dbReference>
<organism>
    <name type="scientific">Homo sapiens</name>
    <name type="common">Human</name>
    <dbReference type="NCBI Taxonomy" id="9606"/>
    <lineage>
        <taxon>Eukaryota</taxon>
        <taxon>Metazoa</taxon>
        <taxon>Chordata</taxon>
        <taxon>Craniata</taxon>
        <taxon>Vertebrata</taxon>
        <taxon>Euteleostomi</taxon>
        <taxon>Mammalia</taxon>
        <taxon>Eutheria</taxon>
        <taxon>Euarchontoglires</taxon>
        <taxon>Primates</taxon>
        <taxon>Haplorrhini</taxon>
        <taxon>Catarrhini</taxon>
        <taxon>Hominidae</taxon>
        <taxon>Homo</taxon>
    </lineage>
</organism>
<sequence length="446" mass="49093">ASTKGPSVFPLAPCSRSTSGGTAALGCLVKDYFPEPVTVSWNSGALTSGVHTFPAVLQSSGLYSLSSVVTVPSSSLGTQTYTCNVNHKPSNTKVDKRVELKTPLGDTTHTCPRCPEPKSCDTPPPCPRCPEPKSCDTPPPCPRCPEPKSCDTPPPCPRCPAPELLGGPSVFLFPPKPKDTLMISRTPEVTCVVVDVSHEDPEVQFKWYVDGVEVHNAKTKPREEQYNSTFRVVSVLTVLHQDWLNGKEYKCKVSNKALPAPIEKTISKTKGQPREPQVYTLPPSREEMTKNQVSLTCLVKGFYPSDIAVEWESSGQPENNYNTTPPMLDSDGSFFLYSKLTVDKSRWQQGNIFSCSVMHEALHNRFTQKSLSLSPELQLEESCAEAQDGELDGLWTTITIFITLFLLSVCYSATVTFFKVKWIFSSVVDLKQTIIPDYRNMIGQGA</sequence>
<feature type="chain" id="PRO_0000153580" description="Immunoglobulin heavy constant gamma 3">
    <location>
        <begin position="1" status="less than"/>
        <end position="446"/>
    </location>
</feature>
<feature type="topological domain" description="Extracellular" evidence="17">
    <location>
        <begin position="1"/>
        <end position="397"/>
    </location>
</feature>
<feature type="transmembrane region" description="Helical" evidence="1">
    <location>
        <begin position="398"/>
        <end position="418"/>
    </location>
</feature>
<feature type="topological domain" description="Cytoplasmic" evidence="17">
    <location>
        <begin position="419"/>
        <end position="446"/>
    </location>
</feature>
<feature type="domain" description="Ig-like 1" evidence="2">
    <location>
        <begin position="6"/>
        <end position="99"/>
    </location>
</feature>
<feature type="repeat">
    <location>
        <begin position="116"/>
        <end position="130"/>
    </location>
</feature>
<feature type="repeat">
    <location>
        <begin position="131"/>
        <end position="145"/>
    </location>
</feature>
<feature type="repeat">
    <location>
        <begin position="146"/>
        <end position="160"/>
    </location>
</feature>
<feature type="domain" description="Ig-like 2" evidence="2">
    <location>
        <begin position="168"/>
        <end position="267"/>
    </location>
</feature>
<feature type="domain" description="Ig-like 3" evidence="2">
    <location>
        <begin position="276"/>
        <end position="372"/>
    </location>
</feature>
<feature type="region of interest" description="CH1">
    <location>
        <begin position="1"/>
        <end position="98"/>
    </location>
</feature>
<feature type="region of interest" description="Hinge">
    <location>
        <begin position="99"/>
        <end position="160"/>
    </location>
</feature>
<feature type="region of interest" description="CH2">
    <location>
        <begin position="161"/>
        <end position="270"/>
    </location>
</feature>
<feature type="region of interest" description="CH3">
    <location>
        <begin position="271"/>
        <end position="376"/>
    </location>
</feature>
<feature type="glycosylation site" description="O-linked (GalNAc...) threonine" evidence="8 9">
    <location>
        <position position="122"/>
    </location>
</feature>
<feature type="glycosylation site" description="O-linked (GalNAc...) threonine" evidence="8 9">
    <location>
        <position position="137"/>
    </location>
</feature>
<feature type="glycosylation site" description="O-linked (GalNAc...) threonine" evidence="8 9">
    <location>
        <position position="152"/>
    </location>
</feature>
<feature type="glycosylation site" description="N-linked (GlcNAc...) asparagine" evidence="3 4 5 6 9">
    <location>
        <position position="227"/>
    </location>
</feature>
<feature type="glycosylation site" description="N-linked (GlcNAc...) asparagine" evidence="9">
    <location>
        <position position="322"/>
    </location>
</feature>
<feature type="disulfide bond" evidence="2">
    <location>
        <begin position="27"/>
        <end position="83"/>
    </location>
</feature>
<feature type="disulfide bond" description="Interchain (with heavy chain dimer)">
    <location>
        <position position="111"/>
    </location>
</feature>
<feature type="disulfide bond" description="Interchain (with heavy chain dimer)">
    <location>
        <position position="114"/>
    </location>
</feature>
<feature type="disulfide bond" description="Interchain (with heavy chain dimer)">
    <location>
        <position position="120"/>
    </location>
</feature>
<feature type="disulfide bond" description="Interchain (with heavy chain dimer)">
    <location>
        <position position="126"/>
    </location>
</feature>
<feature type="disulfide bond" description="Interchain (with heavy chain dimer)">
    <location>
        <position position="129"/>
    </location>
</feature>
<feature type="disulfide bond" description="Interchain (with heavy chain dimer)">
    <location>
        <position position="135"/>
    </location>
</feature>
<feature type="disulfide bond" description="Interchain (with heavy chain dimer)">
    <location>
        <position position="141"/>
    </location>
</feature>
<feature type="disulfide bond" description="Interchain (with heavy chain dimer)">
    <location>
        <position position="144"/>
    </location>
</feature>
<feature type="disulfide bond" description="Interchain (with heavy chain dimer)">
    <location>
        <position position="150"/>
    </location>
</feature>
<feature type="disulfide bond" description="Interchain (with heavy chain dimer)">
    <location>
        <position position="156"/>
    </location>
</feature>
<feature type="disulfide bond" description="Interchain (with heavy chain dimer)">
    <location>
        <position position="159"/>
    </location>
</feature>
<feature type="disulfide bond" evidence="2">
    <location>
        <begin position="191"/>
        <end position="251"/>
    </location>
</feature>
<feature type="disulfide bond" evidence="2">
    <location>
        <begin position="297"/>
        <end position="355"/>
    </location>
</feature>
<feature type="splice variant" id="VSP_061822" description="In isoform 1.">
    <original>EL</original>
    <variation>GK</variation>
    <location>
        <begin position="376"/>
        <end position="377"/>
    </location>
</feature>
<feature type="splice variant" id="VSP_061823" description="In isoform 1.">
    <location>
        <begin position="378"/>
        <end position="446"/>
    </location>
</feature>
<feature type="sequence variant" id="VAR_068695" description="In variant WIS.">
    <location>
        <begin position="1"/>
        <end position="76"/>
    </location>
</feature>
<feature type="sequence variant" id="VAR_068696" description="In variant WIS.">
    <original>GTQTYTCNVNHKPSNTKVDKRV</original>
    <variation>QMQGVNCTVSS</variation>
    <location>
        <begin position="77"/>
        <end position="98"/>
    </location>
</feature>
<feature type="sequence variant" id="VAR_068697" description="In variant WIS.">
    <original>E</original>
    <variation>Q</variation>
    <location>
        <position position="213"/>
    </location>
</feature>
<feature type="sequence variant" id="VAR_003891" description="In variant OMM.">
    <original>P</original>
    <variation>L</variation>
    <location>
        <position position="221"/>
    </location>
</feature>
<feature type="sequence variant" id="VAR_068698" description="In variant WIS.">
    <original>E</original>
    <variation>Q</variation>
    <location>
        <position position="224"/>
    </location>
</feature>
<feature type="sequence variant" id="VAR_003892" description="In variant ZUC and WIS.">
    <original>Y</original>
    <variation>F</variation>
    <location>
        <position position="226"/>
    </location>
</feature>
<feature type="sequence variant" id="VAR_068699" description="In variant WIS.">
    <original>D</original>
    <variation>N</variation>
    <location>
        <position position="242"/>
    </location>
</feature>
<feature type="sequence variant" id="VAR_068700" description="In variant WIS.">
    <original>N</original>
    <variation>D</variation>
    <location>
        <position position="245"/>
    </location>
</feature>
<feature type="sequence variant" id="VAR_003893" description="In variant OMM.">
    <original>T</original>
    <variation>A</variation>
    <location>
        <position position="269"/>
    </location>
</feature>
<feature type="sequence variant" id="VAR_003894" description="In variant OMM.">
    <original>S</original>
    <variation>N</variation>
    <location>
        <position position="314"/>
    </location>
</feature>
<feature type="sequence variant" id="VAR_003895" description="In variant ZUC.">
    <location>
        <position position="314"/>
    </location>
</feature>
<feature type="sequence variant" id="VAR_003896" description="In variant OMM.">
    <original>F</original>
    <variation>Y</variation>
    <location>
        <position position="366"/>
    </location>
</feature>
<feature type="non-terminal residue">
    <location>
        <position position="1"/>
    </location>
</feature>
<feature type="strand" evidence="19">
    <location>
        <begin position="169"/>
        <end position="173"/>
    </location>
</feature>
<feature type="helix" evidence="19">
    <location>
        <begin position="177"/>
        <end position="181"/>
    </location>
</feature>
<feature type="strand" evidence="19">
    <location>
        <begin position="188"/>
        <end position="196"/>
    </location>
</feature>
<feature type="strand" evidence="18">
    <location>
        <begin position="198"/>
        <end position="200"/>
    </location>
</feature>
<feature type="strand" evidence="19">
    <location>
        <begin position="204"/>
        <end position="209"/>
    </location>
</feature>
<feature type="strand" evidence="19">
    <location>
        <begin position="212"/>
        <end position="214"/>
    </location>
</feature>
<feature type="strand" evidence="18">
    <location>
        <begin position="217"/>
        <end position="219"/>
    </location>
</feature>
<feature type="strand" evidence="20">
    <location>
        <begin position="226"/>
        <end position="228"/>
    </location>
</feature>
<feature type="strand" evidence="19">
    <location>
        <begin position="230"/>
        <end position="237"/>
    </location>
</feature>
<feature type="helix" evidence="19">
    <location>
        <begin position="240"/>
        <end position="244"/>
    </location>
</feature>
<feature type="strand" evidence="19">
    <location>
        <begin position="249"/>
        <end position="254"/>
    </location>
</feature>
<feature type="strand" evidence="19">
    <location>
        <begin position="258"/>
        <end position="260"/>
    </location>
</feature>
<feature type="strand" evidence="19">
    <location>
        <begin position="262"/>
        <end position="266"/>
    </location>
</feature>
<feature type="strand" evidence="19">
    <location>
        <begin position="277"/>
        <end position="281"/>
    </location>
</feature>
<feature type="helix" evidence="19">
    <location>
        <begin position="285"/>
        <end position="289"/>
    </location>
</feature>
<feature type="strand" evidence="19">
    <location>
        <begin position="290"/>
        <end position="305"/>
    </location>
</feature>
<feature type="strand" evidence="19">
    <location>
        <begin position="308"/>
        <end position="313"/>
    </location>
</feature>
<feature type="strand" evidence="21">
    <location>
        <begin position="316"/>
        <end position="318"/>
    </location>
</feature>
<feature type="strand" evidence="19">
    <location>
        <begin position="319"/>
        <end position="323"/>
    </location>
</feature>
<feature type="strand" evidence="19">
    <location>
        <begin position="334"/>
        <end position="343"/>
    </location>
</feature>
<feature type="helix" evidence="19">
    <location>
        <begin position="344"/>
        <end position="348"/>
    </location>
</feature>
<feature type="strand" evidence="19">
    <location>
        <begin position="353"/>
        <end position="358"/>
    </location>
</feature>
<feature type="helix" evidence="19">
    <location>
        <begin position="363"/>
        <end position="365"/>
    </location>
</feature>
<feature type="strand" evidence="19">
    <location>
        <begin position="366"/>
        <end position="371"/>
    </location>
</feature>
<name>IGHG3_HUMAN</name>